<gene>
    <name evidence="1" type="primary">odhA</name>
    <name type="ordered locus">BLi02260</name>
    <name type="ordered locus">BL01452</name>
</gene>
<protein>
    <recommendedName>
        <fullName evidence="1">2-oxoglutarate dehydrogenase E1 component</fullName>
        <ecNumber evidence="1">1.2.4.2</ecNumber>
    </recommendedName>
    <alternativeName>
        <fullName evidence="1">Alpha-ketoglutarate dehydrogenase</fullName>
    </alternativeName>
</protein>
<sequence length="944" mass="106671">MFQNSMKQRMTWEEFHGPNLGYVLELYDQYVKDPESLDADLKEMFDELGAPPGDIRAASQKNEEADFTAGSIQKIASAVKLAEDIRTYGHLNASVNPLRKTQEKQELFPLAEYGLTEQDVKKIPASVICKDAPKEVTNGLEAIQYLRNTYKKSISFEFDHVHIFEERNWLMKKIESGELFTPKSKEKLVEVLRRLTEVESLEQFLHKTFVGQKRFSIEGLDALVPMLDDIIAKSVSAGTTNVNIGMAHRGRLNVLAHVLGKPYEIIFSEFQHAPNKDLVPSEGSTGINYGWTGDVKYHLGANRQIQDEHTKTARIALANNPSHLEFIDPIVEGSTRAAQETRTESGYPVQDVKKSMAILIHGDAAFPGEGIVAETLNLSQLKGYQVGGAIHIIANNMIGFTTESNESRSTKYASDLAKGFEIPIVHVNADDPEACLSAVQLAVEYRMTFNKDFLIDLIGYRRFGHNEMDEPSATQPMLYDAVRKHPTVKNIFAEKLIHKGIVDKETVGKIKDAVQKRLEEAYRKVPAKKEDMTHEIVLPEPVSNGFPDVDTSVDFETLRKINQELVSWPENFNVFDKLKRILERRAKAFEDDRKVDWSLAEAMAFASILKDGTPLRLTGQDSERGTFAHRNLVLHDSKTGDEFIALHHLADTKASFAVHNSPLSEGSVLGFEYGYNVSSPETMVIWEAQFGDFANAAQVYFDQFISAGRAKWGQKSGLVVLLPHGYEGQGPEHSSGRTERFLQLAAENNWTVANLTSAAQYFHILRRQAKMLLREEIRPLIIMTPKSLLRNPNTVSEVQELSNSSFKPVYEMSGLSHQYDKVTRLVLSSGKVSIDISDHFNKMEGEKDWLHIARVEELYPFPAKHIKAIFSKLPNLEEIVWVQEEPQNMGAWNYIEPYLREVAPKDVKVRYIGRRRRSSPAEGDPTVHKKEQERIVSDSLTRKN</sequence>
<keyword id="KW-0324">Glycolysis</keyword>
<keyword id="KW-0560">Oxidoreductase</keyword>
<keyword id="KW-1185">Reference proteome</keyword>
<keyword id="KW-0786">Thiamine pyrophosphate</keyword>
<accession>Q65IH4</accession>
<accession>Q62TX6</accession>
<proteinExistence type="inferred from homology"/>
<feature type="chain" id="PRO_0000162167" description="2-oxoglutarate dehydrogenase E1 component">
    <location>
        <begin position="1"/>
        <end position="944"/>
    </location>
</feature>
<feature type="region of interest" description="Disordered" evidence="2">
    <location>
        <begin position="914"/>
        <end position="944"/>
    </location>
</feature>
<feature type="compositionally biased region" description="Basic and acidic residues" evidence="2">
    <location>
        <begin position="925"/>
        <end position="936"/>
    </location>
</feature>
<organism>
    <name type="scientific">Bacillus licheniformis (strain ATCC 14580 / DSM 13 / JCM 2505 / CCUG 7422 / NBRC 12200 / NCIMB 9375 / NCTC 10341 / NRRL NRS-1264 / Gibson 46)</name>
    <dbReference type="NCBI Taxonomy" id="279010"/>
    <lineage>
        <taxon>Bacteria</taxon>
        <taxon>Bacillati</taxon>
        <taxon>Bacillota</taxon>
        <taxon>Bacilli</taxon>
        <taxon>Bacillales</taxon>
        <taxon>Bacillaceae</taxon>
        <taxon>Bacillus</taxon>
    </lineage>
</organism>
<dbReference type="EC" id="1.2.4.2" evidence="1"/>
<dbReference type="EMBL" id="AE017333">
    <property type="protein sequence ID" value="AAU41140.1"/>
    <property type="molecule type" value="Genomic_DNA"/>
</dbReference>
<dbReference type="EMBL" id="CP000002">
    <property type="protein sequence ID" value="AAU23783.1"/>
    <property type="molecule type" value="Genomic_DNA"/>
</dbReference>
<dbReference type="SMR" id="Q65IH4"/>
<dbReference type="STRING" id="279010.BL01452"/>
<dbReference type="KEGG" id="bld:BLi02260"/>
<dbReference type="KEGG" id="bli:BL01452"/>
<dbReference type="eggNOG" id="COG0567">
    <property type="taxonomic scope" value="Bacteria"/>
</dbReference>
<dbReference type="HOGENOM" id="CLU_004709_1_0_9"/>
<dbReference type="Proteomes" id="UP000000606">
    <property type="component" value="Chromosome"/>
</dbReference>
<dbReference type="Bgee" id="BL01452">
    <property type="expression patterns" value="Expressed in pharyngeal slit and 10 other cell types or tissues"/>
</dbReference>
<dbReference type="GO" id="GO:0005829">
    <property type="term" value="C:cytosol"/>
    <property type="evidence" value="ECO:0007669"/>
    <property type="project" value="TreeGrafter"/>
</dbReference>
<dbReference type="GO" id="GO:0045252">
    <property type="term" value="C:oxoglutarate dehydrogenase complex"/>
    <property type="evidence" value="ECO:0007669"/>
    <property type="project" value="TreeGrafter"/>
</dbReference>
<dbReference type="GO" id="GO:0004591">
    <property type="term" value="F:oxoglutarate dehydrogenase (succinyl-transferring) activity"/>
    <property type="evidence" value="ECO:0007669"/>
    <property type="project" value="UniProtKB-UniRule"/>
</dbReference>
<dbReference type="GO" id="GO:0030976">
    <property type="term" value="F:thiamine pyrophosphate binding"/>
    <property type="evidence" value="ECO:0007669"/>
    <property type="project" value="UniProtKB-UniRule"/>
</dbReference>
<dbReference type="GO" id="GO:0006096">
    <property type="term" value="P:glycolytic process"/>
    <property type="evidence" value="ECO:0007669"/>
    <property type="project" value="UniProtKB-UniRule"/>
</dbReference>
<dbReference type="GO" id="GO:0006099">
    <property type="term" value="P:tricarboxylic acid cycle"/>
    <property type="evidence" value="ECO:0007669"/>
    <property type="project" value="TreeGrafter"/>
</dbReference>
<dbReference type="CDD" id="cd02016">
    <property type="entry name" value="TPP_E1_OGDC_like"/>
    <property type="match status" value="1"/>
</dbReference>
<dbReference type="FunFam" id="3.40.50.11610:FF:000002">
    <property type="entry name" value="2-oxoglutarate dehydrogenase E1 component"/>
    <property type="match status" value="1"/>
</dbReference>
<dbReference type="FunFam" id="3.40.50.970:FF:000036">
    <property type="entry name" value="2-oxoglutarate dehydrogenase E1 component"/>
    <property type="match status" value="1"/>
</dbReference>
<dbReference type="Gene3D" id="3.40.50.12470">
    <property type="match status" value="1"/>
</dbReference>
<dbReference type="Gene3D" id="3.40.50.970">
    <property type="match status" value="1"/>
</dbReference>
<dbReference type="Gene3D" id="3.40.50.11610">
    <property type="entry name" value="Multifunctional 2-oxoglutarate metabolism enzyme, C-terminal domain"/>
    <property type="match status" value="1"/>
</dbReference>
<dbReference type="Gene3D" id="1.10.287.1150">
    <property type="entry name" value="TPP helical domain"/>
    <property type="match status" value="1"/>
</dbReference>
<dbReference type="HAMAP" id="MF_01169">
    <property type="entry name" value="SucA_OdhA"/>
    <property type="match status" value="1"/>
</dbReference>
<dbReference type="InterPro" id="IPR011603">
    <property type="entry name" value="2oxoglutarate_DH_E1"/>
</dbReference>
<dbReference type="InterPro" id="IPR023784">
    <property type="entry name" value="2oxoglutarate_DH_E1_bac"/>
</dbReference>
<dbReference type="InterPro" id="IPR001017">
    <property type="entry name" value="DH_E1"/>
</dbReference>
<dbReference type="InterPro" id="IPR042179">
    <property type="entry name" value="KGD_C_sf"/>
</dbReference>
<dbReference type="InterPro" id="IPR031717">
    <property type="entry name" value="ODO-1/KGD_C"/>
</dbReference>
<dbReference type="InterPro" id="IPR029061">
    <property type="entry name" value="THDP-binding"/>
</dbReference>
<dbReference type="InterPro" id="IPR005475">
    <property type="entry name" value="Transketolase-like_Pyr-bd"/>
</dbReference>
<dbReference type="NCBIfam" id="TIGR00239">
    <property type="entry name" value="2oxo_dh_E1"/>
    <property type="match status" value="1"/>
</dbReference>
<dbReference type="NCBIfam" id="NF006914">
    <property type="entry name" value="PRK09404.1"/>
    <property type="match status" value="1"/>
</dbReference>
<dbReference type="NCBIfam" id="NF008907">
    <property type="entry name" value="PRK12270.1"/>
    <property type="match status" value="1"/>
</dbReference>
<dbReference type="PANTHER" id="PTHR23152:SF4">
    <property type="entry name" value="2-OXOADIPATE DEHYDROGENASE COMPLEX COMPONENT E1"/>
    <property type="match status" value="1"/>
</dbReference>
<dbReference type="PANTHER" id="PTHR23152">
    <property type="entry name" value="2-OXOGLUTARATE DEHYDROGENASE"/>
    <property type="match status" value="1"/>
</dbReference>
<dbReference type="Pfam" id="PF00676">
    <property type="entry name" value="E1_dh"/>
    <property type="match status" value="1"/>
</dbReference>
<dbReference type="Pfam" id="PF16870">
    <property type="entry name" value="OxoGdeHyase_C"/>
    <property type="match status" value="1"/>
</dbReference>
<dbReference type="Pfam" id="PF02779">
    <property type="entry name" value="Transket_pyr"/>
    <property type="match status" value="1"/>
</dbReference>
<dbReference type="PIRSF" id="PIRSF000157">
    <property type="entry name" value="Oxoglu_dh_E1"/>
    <property type="match status" value="1"/>
</dbReference>
<dbReference type="SMART" id="SM00861">
    <property type="entry name" value="Transket_pyr"/>
    <property type="match status" value="1"/>
</dbReference>
<dbReference type="SUPFAM" id="SSF52518">
    <property type="entry name" value="Thiamin diphosphate-binding fold (THDP-binding)"/>
    <property type="match status" value="2"/>
</dbReference>
<name>ODO1_BACLD</name>
<evidence type="ECO:0000255" key="1">
    <source>
        <dbReference type="HAMAP-Rule" id="MF_01169"/>
    </source>
</evidence>
<evidence type="ECO:0000256" key="2">
    <source>
        <dbReference type="SAM" id="MobiDB-lite"/>
    </source>
</evidence>
<reference key="1">
    <citation type="journal article" date="2004" name="J. Mol. Microbiol. Biotechnol.">
        <title>The complete genome sequence of Bacillus licheniformis DSM13, an organism with great industrial potential.</title>
        <authorList>
            <person name="Veith B."/>
            <person name="Herzberg C."/>
            <person name="Steckel S."/>
            <person name="Feesche J."/>
            <person name="Maurer K.H."/>
            <person name="Ehrenreich P."/>
            <person name="Baeumer S."/>
            <person name="Henne A."/>
            <person name="Liesegang H."/>
            <person name="Merkl R."/>
            <person name="Ehrenreich A."/>
            <person name="Gottschalk G."/>
        </authorList>
    </citation>
    <scope>NUCLEOTIDE SEQUENCE [LARGE SCALE GENOMIC DNA]</scope>
    <source>
        <strain>ATCC 14580 / DSM 13 / JCM 2505 / CCUG 7422 / NBRC 12200 / NCIMB 9375 / NCTC 10341 / NRRL NRS-1264 / Gibson 46</strain>
    </source>
</reference>
<reference key="2">
    <citation type="journal article" date="2004" name="Genome Biol.">
        <title>Complete genome sequence of the industrial bacterium Bacillus licheniformis and comparisons with closely related Bacillus species.</title>
        <authorList>
            <person name="Rey M.W."/>
            <person name="Ramaiya P."/>
            <person name="Nelson B.A."/>
            <person name="Brody-Karpin S.D."/>
            <person name="Zaretsky E.J."/>
            <person name="Tang M."/>
            <person name="Lopez de Leon A."/>
            <person name="Xiang H."/>
            <person name="Gusti V."/>
            <person name="Clausen I.G."/>
            <person name="Olsen P.B."/>
            <person name="Rasmussen M.D."/>
            <person name="Andersen J.T."/>
            <person name="Joergensen P.L."/>
            <person name="Larsen T.S."/>
            <person name="Sorokin A."/>
            <person name="Bolotin A."/>
            <person name="Lapidus A."/>
            <person name="Galleron N."/>
            <person name="Ehrlich S.D."/>
            <person name="Berka R.M."/>
        </authorList>
    </citation>
    <scope>NUCLEOTIDE SEQUENCE [LARGE SCALE GENOMIC DNA]</scope>
    <source>
        <strain>ATCC 14580 / DSM 13 / JCM 2505 / CCUG 7422 / NBRC 12200 / NCIMB 9375 / NCTC 10341 / NRRL NRS-1264 / Gibson 46</strain>
    </source>
</reference>
<comment type="function">
    <text evidence="1">E1 component of the 2-oxoglutarate dehydrogenase (OGDH) complex which catalyzes the decarboxylation of 2-oxoglutarate, the first step in the conversion of 2-oxoglutarate to succinyl-CoA and CO(2).</text>
</comment>
<comment type="catalytic activity">
    <reaction evidence="1">
        <text>N(6)-[(R)-lipoyl]-L-lysyl-[protein] + 2-oxoglutarate + H(+) = N(6)-[(R)-S(8)-succinyldihydrolipoyl]-L-lysyl-[protein] + CO2</text>
        <dbReference type="Rhea" id="RHEA:12188"/>
        <dbReference type="Rhea" id="RHEA-COMP:10474"/>
        <dbReference type="Rhea" id="RHEA-COMP:20092"/>
        <dbReference type="ChEBI" id="CHEBI:15378"/>
        <dbReference type="ChEBI" id="CHEBI:16526"/>
        <dbReference type="ChEBI" id="CHEBI:16810"/>
        <dbReference type="ChEBI" id="CHEBI:83099"/>
        <dbReference type="ChEBI" id="CHEBI:83120"/>
        <dbReference type="EC" id="1.2.4.2"/>
    </reaction>
</comment>
<comment type="cofactor">
    <cofactor evidence="1">
        <name>thiamine diphosphate</name>
        <dbReference type="ChEBI" id="CHEBI:58937"/>
    </cofactor>
</comment>
<comment type="subunit">
    <text evidence="1">Homodimer. Part of the 2-oxoglutarate dehydrogenase (OGDH) complex composed of E1 (2-oxoglutarate dehydrogenase), E2 (dihydrolipoamide succinyltransferase) and E3 (dihydrolipoamide dehydrogenase); the complex contains multiple copies of the three enzymatic components (E1, E2 and E3).</text>
</comment>
<comment type="similarity">
    <text evidence="1">Belongs to the alpha-ketoglutarate dehydrogenase family.</text>
</comment>